<gene>
    <name type="ordered locus">At2g22730</name>
    <name type="ORF">T9I22.17</name>
</gene>
<name>SPNS3_ARATH</name>
<protein>
    <recommendedName>
        <fullName>Probable sphingolipid transporter spinster homolog 3</fullName>
    </recommendedName>
</protein>
<sequence length="510" mass="55667">MVTKEEDCLPPVTETTSRCYSTSSSTPLAELETVRSLEIVESSSSLSPVWLLVIFCIINLLNYMDRGAIASNGVNGSTRSCNDKGKCTLATGIQGHFNLSNFEDGVLSSSFMVGLLIASPIFASLAKRLIGVGLTVWTIAVLGCGSSFAFWFIVLCRMFVGVGEASFISLAAPFIDDNAPQEQKAAWLGLFYMCIPSGVALGYVYGGYVGKHFSWRYAFWGEAVLMAPFAVLGFLMKPLQLKGSETLKNNNRLQVDNEIEHDQFEVSIETSKSSYANAVFKSFTGFAKDMKVLYKEKVFVVNVLGYVSYNFVIGAYSYWGPKAGYNIYKMKNADMIFGAVTIICGIVGTLSGGFILDRVTATIPNAFKLLSGATFLGAVFCFTAFTLKSLYGFIALFALGELLVFATQAPVNYVCLHCVKPSLRPLSMAISTVAIHIFGDVPSSPLVGIVQDHINSWRKTTLILTSILFLAAAIWFIGKINLNSFYSNDESFLVQIKLFVANLCFCKGYS</sequence>
<keyword id="KW-0025">Alternative splicing</keyword>
<keyword id="KW-0325">Glycoprotein</keyword>
<keyword id="KW-0445">Lipid transport</keyword>
<keyword id="KW-0472">Membrane</keyword>
<keyword id="KW-0496">Mitochondrion</keyword>
<keyword id="KW-0999">Mitochondrion inner membrane</keyword>
<keyword id="KW-1185">Reference proteome</keyword>
<keyword id="KW-0812">Transmembrane</keyword>
<keyword id="KW-1133">Transmembrane helix</keyword>
<keyword id="KW-0813">Transport</keyword>
<comment type="function">
    <text evidence="1">Probable sphingolipid transporter.</text>
</comment>
<comment type="subcellular location">
    <subcellularLocation>
        <location evidence="1">Mitochondrion inner membrane</location>
        <topology evidence="1">Multi-pass membrane protein</topology>
    </subcellularLocation>
</comment>
<comment type="alternative products">
    <event type="alternative splicing"/>
    <isoform>
        <id>F4IKF6-1</id>
        <name>1</name>
        <sequence type="displayed"/>
    </isoform>
    <isoform>
        <id>F4IKF6-2</id>
        <name>2</name>
        <sequence type="described" ref="VSP_042228"/>
    </isoform>
</comment>
<comment type="similarity">
    <text evidence="3">Belongs to the major facilitator superfamily. Spinster (TC 2.A.1.49) family.</text>
</comment>
<organism>
    <name type="scientific">Arabidopsis thaliana</name>
    <name type="common">Mouse-ear cress</name>
    <dbReference type="NCBI Taxonomy" id="3702"/>
    <lineage>
        <taxon>Eukaryota</taxon>
        <taxon>Viridiplantae</taxon>
        <taxon>Streptophyta</taxon>
        <taxon>Embryophyta</taxon>
        <taxon>Tracheophyta</taxon>
        <taxon>Spermatophyta</taxon>
        <taxon>Magnoliopsida</taxon>
        <taxon>eudicotyledons</taxon>
        <taxon>Gunneridae</taxon>
        <taxon>Pentapetalae</taxon>
        <taxon>rosids</taxon>
        <taxon>malvids</taxon>
        <taxon>Brassicales</taxon>
        <taxon>Brassicaceae</taxon>
        <taxon>Camelineae</taxon>
        <taxon>Arabidopsis</taxon>
    </lineage>
</organism>
<reference key="1">
    <citation type="journal article" date="1999" name="Nature">
        <title>Sequence and analysis of chromosome 2 of the plant Arabidopsis thaliana.</title>
        <authorList>
            <person name="Lin X."/>
            <person name="Kaul S."/>
            <person name="Rounsley S.D."/>
            <person name="Shea T.P."/>
            <person name="Benito M.-I."/>
            <person name="Town C.D."/>
            <person name="Fujii C.Y."/>
            <person name="Mason T.M."/>
            <person name="Bowman C.L."/>
            <person name="Barnstead M.E."/>
            <person name="Feldblyum T.V."/>
            <person name="Buell C.R."/>
            <person name="Ketchum K.A."/>
            <person name="Lee J.J."/>
            <person name="Ronning C.M."/>
            <person name="Koo H.L."/>
            <person name="Moffat K.S."/>
            <person name="Cronin L.A."/>
            <person name="Shen M."/>
            <person name="Pai G."/>
            <person name="Van Aken S."/>
            <person name="Umayam L."/>
            <person name="Tallon L.J."/>
            <person name="Gill J.E."/>
            <person name="Adams M.D."/>
            <person name="Carrera A.J."/>
            <person name="Creasy T.H."/>
            <person name="Goodman H.M."/>
            <person name="Somerville C.R."/>
            <person name="Copenhaver G.P."/>
            <person name="Preuss D."/>
            <person name="Nierman W.C."/>
            <person name="White O."/>
            <person name="Eisen J.A."/>
            <person name="Salzberg S.L."/>
            <person name="Fraser C.M."/>
            <person name="Venter J.C."/>
        </authorList>
    </citation>
    <scope>NUCLEOTIDE SEQUENCE [LARGE SCALE GENOMIC DNA]</scope>
    <source>
        <strain>cv. Columbia</strain>
    </source>
</reference>
<reference key="2">
    <citation type="journal article" date="2017" name="Plant J.">
        <title>Araport11: a complete reannotation of the Arabidopsis thaliana reference genome.</title>
        <authorList>
            <person name="Cheng C.Y."/>
            <person name="Krishnakumar V."/>
            <person name="Chan A.P."/>
            <person name="Thibaud-Nissen F."/>
            <person name="Schobel S."/>
            <person name="Town C.D."/>
        </authorList>
    </citation>
    <scope>GENOME REANNOTATION</scope>
    <source>
        <strain>cv. Columbia</strain>
    </source>
</reference>
<evidence type="ECO:0000250" key="1"/>
<evidence type="ECO:0000255" key="2"/>
<evidence type="ECO:0000305" key="3"/>
<dbReference type="EMBL" id="AC006340">
    <property type="protein sequence ID" value="AAD15581.1"/>
    <property type="molecule type" value="Genomic_DNA"/>
</dbReference>
<dbReference type="EMBL" id="CP002685">
    <property type="protein sequence ID" value="AEC07346.1"/>
    <property type="molecule type" value="Genomic_DNA"/>
</dbReference>
<dbReference type="EMBL" id="CP002685">
    <property type="protein sequence ID" value="ANM62554.1"/>
    <property type="molecule type" value="Genomic_DNA"/>
</dbReference>
<dbReference type="PIR" id="B84616">
    <property type="entry name" value="B84616"/>
</dbReference>
<dbReference type="RefSeq" id="NP_001324703.1">
    <molecule id="F4IKF6-2"/>
    <property type="nucleotide sequence ID" value="NM_001335818.1"/>
</dbReference>
<dbReference type="RefSeq" id="NP_179858.2">
    <molecule id="F4IKF6-1"/>
    <property type="nucleotide sequence ID" value="NM_127838.3"/>
</dbReference>
<dbReference type="SMR" id="F4IKF6"/>
<dbReference type="FunCoup" id="F4IKF6">
    <property type="interactions" value="2718"/>
</dbReference>
<dbReference type="STRING" id="3702.F4IKF6"/>
<dbReference type="TCDB" id="2.A.1.49.3">
    <property type="family name" value="the major facilitator superfamily (mfs)"/>
</dbReference>
<dbReference type="GlyGen" id="F4IKF6">
    <property type="glycosylation" value="2 sites"/>
</dbReference>
<dbReference type="PaxDb" id="3702-AT2G22730.1"/>
<dbReference type="EnsemblPlants" id="AT2G22730.1">
    <molecule id="F4IKF6-1"/>
    <property type="protein sequence ID" value="AT2G22730.1"/>
    <property type="gene ID" value="AT2G22730"/>
</dbReference>
<dbReference type="EnsemblPlants" id="AT2G22730.6">
    <molecule id="F4IKF6-2"/>
    <property type="protein sequence ID" value="AT2G22730.6"/>
    <property type="gene ID" value="AT2G22730"/>
</dbReference>
<dbReference type="GeneID" id="816803"/>
<dbReference type="Gramene" id="AT2G22730.1">
    <molecule id="F4IKF6-1"/>
    <property type="protein sequence ID" value="AT2G22730.1"/>
    <property type="gene ID" value="AT2G22730"/>
</dbReference>
<dbReference type="Gramene" id="AT2G22730.6">
    <molecule id="F4IKF6-2"/>
    <property type="protein sequence ID" value="AT2G22730.6"/>
    <property type="gene ID" value="AT2G22730"/>
</dbReference>
<dbReference type="KEGG" id="ath:AT2G22730"/>
<dbReference type="Araport" id="AT2G22730"/>
<dbReference type="TAIR" id="AT2G22730"/>
<dbReference type="eggNOG" id="KOG1330">
    <property type="taxonomic scope" value="Eukaryota"/>
</dbReference>
<dbReference type="HOGENOM" id="CLU_001265_55_3_1"/>
<dbReference type="InParanoid" id="F4IKF6"/>
<dbReference type="PRO" id="PR:F4IKF6"/>
<dbReference type="Proteomes" id="UP000006548">
    <property type="component" value="Chromosome 2"/>
</dbReference>
<dbReference type="ExpressionAtlas" id="F4IKF6">
    <property type="expression patterns" value="baseline and differential"/>
</dbReference>
<dbReference type="GO" id="GO:0005743">
    <property type="term" value="C:mitochondrial inner membrane"/>
    <property type="evidence" value="ECO:0007669"/>
    <property type="project" value="UniProtKB-SubCell"/>
</dbReference>
<dbReference type="GO" id="GO:0022857">
    <property type="term" value="F:transmembrane transporter activity"/>
    <property type="evidence" value="ECO:0007669"/>
    <property type="project" value="InterPro"/>
</dbReference>
<dbReference type="GO" id="GO:0006869">
    <property type="term" value="P:lipid transport"/>
    <property type="evidence" value="ECO:0007669"/>
    <property type="project" value="UniProtKB-KW"/>
</dbReference>
<dbReference type="CDD" id="cd17328">
    <property type="entry name" value="MFS_spinster_like"/>
    <property type="match status" value="1"/>
</dbReference>
<dbReference type="Gene3D" id="1.20.1250.20">
    <property type="entry name" value="MFS general substrate transporter like domains"/>
    <property type="match status" value="1"/>
</dbReference>
<dbReference type="InterPro" id="IPR011701">
    <property type="entry name" value="MFS"/>
</dbReference>
<dbReference type="InterPro" id="IPR020846">
    <property type="entry name" value="MFS_dom"/>
</dbReference>
<dbReference type="InterPro" id="IPR044770">
    <property type="entry name" value="MFS_spinster-like"/>
</dbReference>
<dbReference type="InterPro" id="IPR036259">
    <property type="entry name" value="MFS_trans_sf"/>
</dbReference>
<dbReference type="PANTHER" id="PTHR23505:SF79">
    <property type="entry name" value="PROTEIN SPINSTER"/>
    <property type="match status" value="1"/>
</dbReference>
<dbReference type="PANTHER" id="PTHR23505">
    <property type="entry name" value="SPINSTER"/>
    <property type="match status" value="1"/>
</dbReference>
<dbReference type="Pfam" id="PF07690">
    <property type="entry name" value="MFS_1"/>
    <property type="match status" value="1"/>
</dbReference>
<dbReference type="SUPFAM" id="SSF103473">
    <property type="entry name" value="MFS general substrate transporter"/>
    <property type="match status" value="1"/>
</dbReference>
<dbReference type="PROSITE" id="PS50850">
    <property type="entry name" value="MFS"/>
    <property type="match status" value="1"/>
</dbReference>
<accession>F4IKF6</accession>
<accession>Q9ZQ41</accession>
<proteinExistence type="inferred from homology"/>
<feature type="chain" id="PRO_0000415371" description="Probable sphingolipid transporter spinster homolog 3">
    <location>
        <begin position="1"/>
        <end position="510"/>
    </location>
</feature>
<feature type="transmembrane region" description="Helical" evidence="2">
    <location>
        <begin position="44"/>
        <end position="64"/>
    </location>
</feature>
<feature type="transmembrane region" description="Helical" evidence="2">
    <location>
        <begin position="106"/>
        <end position="126"/>
    </location>
</feature>
<feature type="transmembrane region" description="Helical" evidence="2">
    <location>
        <begin position="136"/>
        <end position="156"/>
    </location>
</feature>
<feature type="transmembrane region" description="Helical" evidence="2">
    <location>
        <begin position="158"/>
        <end position="178"/>
    </location>
</feature>
<feature type="transmembrane region" description="Helical" evidence="2">
    <location>
        <begin position="185"/>
        <end position="205"/>
    </location>
</feature>
<feature type="transmembrane region" description="Helical" evidence="2">
    <location>
        <begin position="219"/>
        <end position="239"/>
    </location>
</feature>
<feature type="transmembrane region" description="Helical" evidence="2">
    <location>
        <begin position="298"/>
        <end position="318"/>
    </location>
</feature>
<feature type="transmembrane region" description="Helical" evidence="2">
    <location>
        <begin position="336"/>
        <end position="356"/>
    </location>
</feature>
<feature type="transmembrane region" description="Helical" evidence="2">
    <location>
        <begin position="369"/>
        <end position="387"/>
    </location>
</feature>
<feature type="transmembrane region" description="Helical" evidence="2">
    <location>
        <begin position="392"/>
        <end position="414"/>
    </location>
</feature>
<feature type="transmembrane region" description="Helical" evidence="2">
    <location>
        <begin position="430"/>
        <end position="450"/>
    </location>
</feature>
<feature type="transmembrane region" description="Helical" evidence="2">
    <location>
        <begin position="462"/>
        <end position="482"/>
    </location>
</feature>
<feature type="glycosylation site" description="N-linked (GlcNAc...) asparagine" evidence="2">
    <location>
        <position position="75"/>
    </location>
</feature>
<feature type="glycosylation site" description="N-linked (GlcNAc...) asparagine" evidence="2">
    <location>
        <position position="98"/>
    </location>
</feature>
<feature type="splice variant" id="VSP_042228" description="In isoform 2." evidence="3">
    <original>KINLNSFYSNDESFLVQIKLFVANLCFCKGYS</original>
    <variation>IFINSVDRFNQEETGSENPRRPELSSRTP</variation>
    <location>
        <begin position="479"/>
        <end position="510"/>
    </location>
</feature>